<keyword id="KW-0028">Amino-acid biosynthesis</keyword>
<keyword id="KW-0057">Aromatic amino acid biosynthesis</keyword>
<keyword id="KW-0170">Cobalt</keyword>
<keyword id="KW-0963">Cytoplasm</keyword>
<keyword id="KW-0456">Lyase</keyword>
<keyword id="KW-0479">Metal-binding</keyword>
<keyword id="KW-0520">NAD</keyword>
<keyword id="KW-0547">Nucleotide-binding</keyword>
<keyword id="KW-0862">Zinc</keyword>
<protein>
    <recommendedName>
        <fullName evidence="1">3-dehydroquinate synthase</fullName>
        <shortName evidence="1">DHQS</shortName>
        <ecNumber evidence="1">4.2.3.4</ecNumber>
    </recommendedName>
</protein>
<dbReference type="EC" id="4.2.3.4" evidence="1"/>
<dbReference type="EMBL" id="CP001176">
    <property type="protein sequence ID" value="ACK61649.1"/>
    <property type="molecule type" value="Genomic_DNA"/>
</dbReference>
<dbReference type="RefSeq" id="WP_000526820.1">
    <property type="nucleotide sequence ID" value="NC_011725.1"/>
</dbReference>
<dbReference type="SMR" id="B7HHS1"/>
<dbReference type="KEGG" id="bcb:BCB4264_A1573"/>
<dbReference type="HOGENOM" id="CLU_001201_0_2_9"/>
<dbReference type="UniPathway" id="UPA00053">
    <property type="reaction ID" value="UER00085"/>
</dbReference>
<dbReference type="Proteomes" id="UP000007096">
    <property type="component" value="Chromosome"/>
</dbReference>
<dbReference type="GO" id="GO:0005737">
    <property type="term" value="C:cytoplasm"/>
    <property type="evidence" value="ECO:0007669"/>
    <property type="project" value="UniProtKB-SubCell"/>
</dbReference>
<dbReference type="GO" id="GO:0003856">
    <property type="term" value="F:3-dehydroquinate synthase activity"/>
    <property type="evidence" value="ECO:0007669"/>
    <property type="project" value="UniProtKB-UniRule"/>
</dbReference>
<dbReference type="GO" id="GO:0046872">
    <property type="term" value="F:metal ion binding"/>
    <property type="evidence" value="ECO:0007669"/>
    <property type="project" value="UniProtKB-KW"/>
</dbReference>
<dbReference type="GO" id="GO:0000166">
    <property type="term" value="F:nucleotide binding"/>
    <property type="evidence" value="ECO:0007669"/>
    <property type="project" value="UniProtKB-KW"/>
</dbReference>
<dbReference type="GO" id="GO:0008652">
    <property type="term" value="P:amino acid biosynthetic process"/>
    <property type="evidence" value="ECO:0007669"/>
    <property type="project" value="UniProtKB-KW"/>
</dbReference>
<dbReference type="GO" id="GO:0009073">
    <property type="term" value="P:aromatic amino acid family biosynthetic process"/>
    <property type="evidence" value="ECO:0007669"/>
    <property type="project" value="UniProtKB-KW"/>
</dbReference>
<dbReference type="GO" id="GO:0009423">
    <property type="term" value="P:chorismate biosynthetic process"/>
    <property type="evidence" value="ECO:0007669"/>
    <property type="project" value="UniProtKB-UniRule"/>
</dbReference>
<dbReference type="CDD" id="cd08195">
    <property type="entry name" value="DHQS"/>
    <property type="match status" value="1"/>
</dbReference>
<dbReference type="FunFam" id="1.20.1090.10:FF:000008">
    <property type="entry name" value="3-dehydroquinate synthase"/>
    <property type="match status" value="1"/>
</dbReference>
<dbReference type="FunFam" id="3.40.50.1970:FF:000001">
    <property type="entry name" value="3-dehydroquinate synthase"/>
    <property type="match status" value="1"/>
</dbReference>
<dbReference type="Gene3D" id="3.40.50.1970">
    <property type="match status" value="1"/>
</dbReference>
<dbReference type="Gene3D" id="1.20.1090.10">
    <property type="entry name" value="Dehydroquinate synthase-like - alpha domain"/>
    <property type="match status" value="1"/>
</dbReference>
<dbReference type="HAMAP" id="MF_00110">
    <property type="entry name" value="DHQ_synthase"/>
    <property type="match status" value="1"/>
</dbReference>
<dbReference type="InterPro" id="IPR050071">
    <property type="entry name" value="Dehydroquinate_synthase"/>
</dbReference>
<dbReference type="InterPro" id="IPR016037">
    <property type="entry name" value="DHQ_synth_AroB"/>
</dbReference>
<dbReference type="InterPro" id="IPR030963">
    <property type="entry name" value="DHQ_synth_fam"/>
</dbReference>
<dbReference type="InterPro" id="IPR030960">
    <property type="entry name" value="DHQS/DOIS_N"/>
</dbReference>
<dbReference type="InterPro" id="IPR056179">
    <property type="entry name" value="DHQS_C"/>
</dbReference>
<dbReference type="NCBIfam" id="TIGR01357">
    <property type="entry name" value="aroB"/>
    <property type="match status" value="1"/>
</dbReference>
<dbReference type="PANTHER" id="PTHR43622">
    <property type="entry name" value="3-DEHYDROQUINATE SYNTHASE"/>
    <property type="match status" value="1"/>
</dbReference>
<dbReference type="PANTHER" id="PTHR43622:SF7">
    <property type="entry name" value="3-DEHYDROQUINATE SYNTHASE, CHLOROPLASTIC"/>
    <property type="match status" value="1"/>
</dbReference>
<dbReference type="Pfam" id="PF01761">
    <property type="entry name" value="DHQ_synthase"/>
    <property type="match status" value="1"/>
</dbReference>
<dbReference type="Pfam" id="PF24621">
    <property type="entry name" value="DHQS_C"/>
    <property type="match status" value="1"/>
</dbReference>
<dbReference type="PIRSF" id="PIRSF001455">
    <property type="entry name" value="DHQ_synth"/>
    <property type="match status" value="1"/>
</dbReference>
<dbReference type="SUPFAM" id="SSF56796">
    <property type="entry name" value="Dehydroquinate synthase-like"/>
    <property type="match status" value="1"/>
</dbReference>
<evidence type="ECO:0000255" key="1">
    <source>
        <dbReference type="HAMAP-Rule" id="MF_00110"/>
    </source>
</evidence>
<feature type="chain" id="PRO_1000117473" description="3-dehydroquinate synthase">
    <location>
        <begin position="1"/>
        <end position="361"/>
    </location>
</feature>
<feature type="binding site" evidence="1">
    <location>
        <begin position="72"/>
        <end position="77"/>
    </location>
    <ligand>
        <name>NAD(+)</name>
        <dbReference type="ChEBI" id="CHEBI:57540"/>
    </ligand>
</feature>
<feature type="binding site" evidence="1">
    <location>
        <begin position="130"/>
        <end position="131"/>
    </location>
    <ligand>
        <name>NAD(+)</name>
        <dbReference type="ChEBI" id="CHEBI:57540"/>
    </ligand>
</feature>
<feature type="binding site" evidence="1">
    <location>
        <position position="142"/>
    </location>
    <ligand>
        <name>NAD(+)</name>
        <dbReference type="ChEBI" id="CHEBI:57540"/>
    </ligand>
</feature>
<feature type="binding site" evidence="1">
    <location>
        <position position="151"/>
    </location>
    <ligand>
        <name>NAD(+)</name>
        <dbReference type="ChEBI" id="CHEBI:57540"/>
    </ligand>
</feature>
<feature type="binding site" evidence="1">
    <location>
        <position position="184"/>
    </location>
    <ligand>
        <name>Zn(2+)</name>
        <dbReference type="ChEBI" id="CHEBI:29105"/>
    </ligand>
</feature>
<feature type="binding site" evidence="1">
    <location>
        <position position="247"/>
    </location>
    <ligand>
        <name>Zn(2+)</name>
        <dbReference type="ChEBI" id="CHEBI:29105"/>
    </ligand>
</feature>
<feature type="binding site" evidence="1">
    <location>
        <position position="264"/>
    </location>
    <ligand>
        <name>Zn(2+)</name>
        <dbReference type="ChEBI" id="CHEBI:29105"/>
    </ligand>
</feature>
<gene>
    <name evidence="1" type="primary">aroB</name>
    <name type="ordered locus">BCB4264_A1573</name>
</gene>
<name>AROB_BACC4</name>
<proteinExistence type="inferred from homology"/>
<accession>B7HHS1</accession>
<sequence length="361" mass="40073">MGNIHIQTKSKEYDVHVGKEVLSNLTTIVQNMQPAVSNVMIISDEAVASLHLQTVIDALQVEQHVFSFVVPSGEKEKSFENFYAAHTSALENKLDRNSLILALGGGMIGDLAGFVAASFMRGIRFVQVPTTLLAHDSAVGGKVAINHPLGKNMIGAFHQPEAVVYHTPFLQSLPEKEWRSGYAEVIKHALIGDVELYHWLKEEVQTLADLHDEKLIHILTKAIPVKANVVSQDETEKGVRAHLNFGHTLGHALEKELGYGNITHGDGVAVGMLFAIFLSEQVYKVDLAYEDMKQWFLKYGYPKMPRDLNVERLVQLMKQDKKANAGAIHMVLMQEYGVVNVVSISDETVHIALEAFQKDMV</sequence>
<comment type="function">
    <text evidence="1">Catalyzes the conversion of 3-deoxy-D-arabino-heptulosonate 7-phosphate (DAHP) to dehydroquinate (DHQ).</text>
</comment>
<comment type="catalytic activity">
    <reaction evidence="1">
        <text>7-phospho-2-dehydro-3-deoxy-D-arabino-heptonate = 3-dehydroquinate + phosphate</text>
        <dbReference type="Rhea" id="RHEA:21968"/>
        <dbReference type="ChEBI" id="CHEBI:32364"/>
        <dbReference type="ChEBI" id="CHEBI:43474"/>
        <dbReference type="ChEBI" id="CHEBI:58394"/>
        <dbReference type="EC" id="4.2.3.4"/>
    </reaction>
</comment>
<comment type="cofactor">
    <cofactor evidence="1">
        <name>Co(2+)</name>
        <dbReference type="ChEBI" id="CHEBI:48828"/>
    </cofactor>
    <cofactor evidence="1">
        <name>Zn(2+)</name>
        <dbReference type="ChEBI" id="CHEBI:29105"/>
    </cofactor>
    <text evidence="1">Binds 1 divalent metal cation per subunit. Can use either Co(2+) or Zn(2+).</text>
</comment>
<comment type="cofactor">
    <cofactor evidence="1">
        <name>NAD(+)</name>
        <dbReference type="ChEBI" id="CHEBI:57540"/>
    </cofactor>
</comment>
<comment type="pathway">
    <text evidence="1">Metabolic intermediate biosynthesis; chorismate biosynthesis; chorismate from D-erythrose 4-phosphate and phosphoenolpyruvate: step 2/7.</text>
</comment>
<comment type="subcellular location">
    <subcellularLocation>
        <location evidence="1">Cytoplasm</location>
    </subcellularLocation>
</comment>
<comment type="similarity">
    <text evidence="1">Belongs to the sugar phosphate cyclases superfamily. Dehydroquinate synthase family.</text>
</comment>
<organism>
    <name type="scientific">Bacillus cereus (strain B4264)</name>
    <dbReference type="NCBI Taxonomy" id="405532"/>
    <lineage>
        <taxon>Bacteria</taxon>
        <taxon>Bacillati</taxon>
        <taxon>Bacillota</taxon>
        <taxon>Bacilli</taxon>
        <taxon>Bacillales</taxon>
        <taxon>Bacillaceae</taxon>
        <taxon>Bacillus</taxon>
        <taxon>Bacillus cereus group</taxon>
    </lineage>
</organism>
<reference key="1">
    <citation type="submission" date="2008-10" db="EMBL/GenBank/DDBJ databases">
        <title>Genome sequence of Bacillus cereus B4264.</title>
        <authorList>
            <person name="Dodson R.J."/>
            <person name="Durkin A.S."/>
            <person name="Rosovitz M.J."/>
            <person name="Rasko D.A."/>
            <person name="Hoffmaster A."/>
            <person name="Ravel J."/>
            <person name="Sutton G."/>
        </authorList>
    </citation>
    <scope>NUCLEOTIDE SEQUENCE [LARGE SCALE GENOMIC DNA]</scope>
    <source>
        <strain>B4264</strain>
    </source>
</reference>